<feature type="chain" id="PRO_1000097389" description="Thymidylate kinase">
    <location>
        <begin position="1"/>
        <end position="214"/>
    </location>
</feature>
<feature type="binding site" evidence="1">
    <location>
        <begin position="7"/>
        <end position="14"/>
    </location>
    <ligand>
        <name>ATP</name>
        <dbReference type="ChEBI" id="CHEBI:30616"/>
    </ligand>
</feature>
<protein>
    <recommendedName>
        <fullName evidence="1">Thymidylate kinase</fullName>
        <ecNumber evidence="1">2.7.4.9</ecNumber>
    </recommendedName>
    <alternativeName>
        <fullName evidence="1">dTMP kinase</fullName>
    </alternativeName>
</protein>
<name>KTHY_DESOH</name>
<comment type="function">
    <text evidence="1">Phosphorylation of dTMP to form dTDP in both de novo and salvage pathways of dTTP synthesis.</text>
</comment>
<comment type="catalytic activity">
    <reaction evidence="1">
        <text>dTMP + ATP = dTDP + ADP</text>
        <dbReference type="Rhea" id="RHEA:13517"/>
        <dbReference type="ChEBI" id="CHEBI:30616"/>
        <dbReference type="ChEBI" id="CHEBI:58369"/>
        <dbReference type="ChEBI" id="CHEBI:63528"/>
        <dbReference type="ChEBI" id="CHEBI:456216"/>
        <dbReference type="EC" id="2.7.4.9"/>
    </reaction>
</comment>
<comment type="similarity">
    <text evidence="1">Belongs to the thymidylate kinase family.</text>
</comment>
<proteinExistence type="inferred from homology"/>
<organism>
    <name type="scientific">Desulfosudis oleivorans (strain DSM 6200 / JCM 39069 / Hxd3)</name>
    <name type="common">Desulfococcus oleovorans</name>
    <dbReference type="NCBI Taxonomy" id="96561"/>
    <lineage>
        <taxon>Bacteria</taxon>
        <taxon>Pseudomonadati</taxon>
        <taxon>Thermodesulfobacteriota</taxon>
        <taxon>Desulfobacteria</taxon>
        <taxon>Desulfobacterales</taxon>
        <taxon>Desulfosudaceae</taxon>
        <taxon>Desulfosudis</taxon>
    </lineage>
</organism>
<accession>A8ZXL3</accession>
<sequence>MFITLEGIEGAGKTTQLPRLVDFLEQHGHTCVVTREPGGTGMGQKIRSLLLDPDNSDMSPETELFLYAADRAQHVRRLIEPALAEGKTVVCDRFADATEVYQGWARGLDMELVQVLNRVATGGRKPDITLLFDLPPEAGLKRAWQRIARNGKEAADCRFENEKMAFHERVRHGYLDLARREPERFVVIDALGPAAEVAGRMIAALERVPDINRP</sequence>
<gene>
    <name evidence="1" type="primary">tmk</name>
    <name type="ordered locus">Dole_1165</name>
</gene>
<dbReference type="EC" id="2.7.4.9" evidence="1"/>
<dbReference type="EMBL" id="CP000859">
    <property type="protein sequence ID" value="ABW66971.1"/>
    <property type="molecule type" value="Genomic_DNA"/>
</dbReference>
<dbReference type="RefSeq" id="WP_012174589.1">
    <property type="nucleotide sequence ID" value="NC_009943.1"/>
</dbReference>
<dbReference type="SMR" id="A8ZXL3"/>
<dbReference type="STRING" id="96561.Dole_1165"/>
<dbReference type="KEGG" id="dol:Dole_1165"/>
<dbReference type="eggNOG" id="COG0125">
    <property type="taxonomic scope" value="Bacteria"/>
</dbReference>
<dbReference type="HOGENOM" id="CLU_049131_0_2_7"/>
<dbReference type="OrthoDB" id="9774907at2"/>
<dbReference type="Proteomes" id="UP000008561">
    <property type="component" value="Chromosome"/>
</dbReference>
<dbReference type="GO" id="GO:0005829">
    <property type="term" value="C:cytosol"/>
    <property type="evidence" value="ECO:0007669"/>
    <property type="project" value="TreeGrafter"/>
</dbReference>
<dbReference type="GO" id="GO:0005524">
    <property type="term" value="F:ATP binding"/>
    <property type="evidence" value="ECO:0007669"/>
    <property type="project" value="UniProtKB-UniRule"/>
</dbReference>
<dbReference type="GO" id="GO:0004798">
    <property type="term" value="F:dTMP kinase activity"/>
    <property type="evidence" value="ECO:0007669"/>
    <property type="project" value="UniProtKB-UniRule"/>
</dbReference>
<dbReference type="GO" id="GO:0006233">
    <property type="term" value="P:dTDP biosynthetic process"/>
    <property type="evidence" value="ECO:0007669"/>
    <property type="project" value="InterPro"/>
</dbReference>
<dbReference type="GO" id="GO:0006235">
    <property type="term" value="P:dTTP biosynthetic process"/>
    <property type="evidence" value="ECO:0007669"/>
    <property type="project" value="UniProtKB-UniRule"/>
</dbReference>
<dbReference type="GO" id="GO:0006227">
    <property type="term" value="P:dUDP biosynthetic process"/>
    <property type="evidence" value="ECO:0007669"/>
    <property type="project" value="TreeGrafter"/>
</dbReference>
<dbReference type="CDD" id="cd01672">
    <property type="entry name" value="TMPK"/>
    <property type="match status" value="1"/>
</dbReference>
<dbReference type="FunFam" id="3.40.50.300:FF:000225">
    <property type="entry name" value="Thymidylate kinase"/>
    <property type="match status" value="1"/>
</dbReference>
<dbReference type="Gene3D" id="3.40.50.300">
    <property type="entry name" value="P-loop containing nucleotide triphosphate hydrolases"/>
    <property type="match status" value="1"/>
</dbReference>
<dbReference type="HAMAP" id="MF_00165">
    <property type="entry name" value="Thymidylate_kinase"/>
    <property type="match status" value="1"/>
</dbReference>
<dbReference type="InterPro" id="IPR027417">
    <property type="entry name" value="P-loop_NTPase"/>
</dbReference>
<dbReference type="InterPro" id="IPR039430">
    <property type="entry name" value="Thymidylate_kin-like_dom"/>
</dbReference>
<dbReference type="InterPro" id="IPR018094">
    <property type="entry name" value="Thymidylate_kinase"/>
</dbReference>
<dbReference type="NCBIfam" id="TIGR00041">
    <property type="entry name" value="DTMP_kinase"/>
    <property type="match status" value="1"/>
</dbReference>
<dbReference type="PANTHER" id="PTHR10344">
    <property type="entry name" value="THYMIDYLATE KINASE"/>
    <property type="match status" value="1"/>
</dbReference>
<dbReference type="PANTHER" id="PTHR10344:SF4">
    <property type="entry name" value="UMP-CMP KINASE 2, MITOCHONDRIAL"/>
    <property type="match status" value="1"/>
</dbReference>
<dbReference type="Pfam" id="PF02223">
    <property type="entry name" value="Thymidylate_kin"/>
    <property type="match status" value="1"/>
</dbReference>
<dbReference type="SUPFAM" id="SSF52540">
    <property type="entry name" value="P-loop containing nucleoside triphosphate hydrolases"/>
    <property type="match status" value="1"/>
</dbReference>
<keyword id="KW-0067">ATP-binding</keyword>
<keyword id="KW-0418">Kinase</keyword>
<keyword id="KW-0545">Nucleotide biosynthesis</keyword>
<keyword id="KW-0547">Nucleotide-binding</keyword>
<keyword id="KW-1185">Reference proteome</keyword>
<keyword id="KW-0808">Transferase</keyword>
<reference key="1">
    <citation type="submission" date="2007-10" db="EMBL/GenBank/DDBJ databases">
        <title>Complete sequence of Desulfococcus oleovorans Hxd3.</title>
        <authorList>
            <consortium name="US DOE Joint Genome Institute"/>
            <person name="Copeland A."/>
            <person name="Lucas S."/>
            <person name="Lapidus A."/>
            <person name="Barry K."/>
            <person name="Glavina del Rio T."/>
            <person name="Dalin E."/>
            <person name="Tice H."/>
            <person name="Pitluck S."/>
            <person name="Kiss H."/>
            <person name="Brettin T."/>
            <person name="Bruce D."/>
            <person name="Detter J.C."/>
            <person name="Han C."/>
            <person name="Schmutz J."/>
            <person name="Larimer F."/>
            <person name="Land M."/>
            <person name="Hauser L."/>
            <person name="Kyrpides N."/>
            <person name="Kim E."/>
            <person name="Wawrik B."/>
            <person name="Richardson P."/>
        </authorList>
    </citation>
    <scope>NUCLEOTIDE SEQUENCE [LARGE SCALE GENOMIC DNA]</scope>
    <source>
        <strain>DSM 6200 / JCM 39069 / Hxd3</strain>
    </source>
</reference>
<evidence type="ECO:0000255" key="1">
    <source>
        <dbReference type="HAMAP-Rule" id="MF_00165"/>
    </source>
</evidence>